<keyword id="KW-1185">Reference proteome</keyword>
<dbReference type="EMBL" id="M35027">
    <property type="protein sequence ID" value="AAA48132.1"/>
    <property type="molecule type" value="Genomic_DNA"/>
</dbReference>
<dbReference type="PIR" id="C42524">
    <property type="entry name" value="C42524"/>
</dbReference>
<dbReference type="Proteomes" id="UP000008269">
    <property type="component" value="Segment"/>
</dbReference>
<dbReference type="InterPro" id="IPR020113">
    <property type="entry name" value="DUF5439"/>
</dbReference>
<dbReference type="Pfam" id="PF17507">
    <property type="entry name" value="DUF5439"/>
    <property type="match status" value="1"/>
</dbReference>
<organism>
    <name type="scientific">Vaccinia virus (strain Copenhagen)</name>
    <name type="common">VACV</name>
    <dbReference type="NCBI Taxonomy" id="10249"/>
    <lineage>
        <taxon>Viruses</taxon>
        <taxon>Varidnaviria</taxon>
        <taxon>Bamfordvirae</taxon>
        <taxon>Nucleocytoviricota</taxon>
        <taxon>Pokkesviricetes</taxon>
        <taxon>Chitovirales</taxon>
        <taxon>Poxviridae</taxon>
        <taxon>Chordopoxvirinae</taxon>
        <taxon>Orthopoxvirus</taxon>
        <taxon>Vaccinia virus</taxon>
    </lineage>
</organism>
<protein>
    <recommendedName>
        <fullName>Uncharacterized 9.3 kDa protein</fullName>
    </recommendedName>
</protein>
<reference key="1">
    <citation type="journal article" date="1990" name="Virology">
        <title>The complete DNA sequence of vaccinia virus.</title>
        <authorList>
            <person name="Goebel S.J."/>
            <person name="Johnson G.P."/>
            <person name="Perkus M.E."/>
            <person name="Davis S.W."/>
            <person name="Winslow J.P."/>
            <person name="Paoletti E."/>
        </authorList>
    </citation>
    <scope>NUCLEOTIDE SEQUENCE [LARGE SCALE GENOMIC DNA]</scope>
</reference>
<reference key="2">
    <citation type="journal article" date="1990" name="Virology">
        <title>Appendix to 'The complete DNA sequence of vaccinia virus'.</title>
        <authorList>
            <person name="Goebel S.J."/>
            <person name="Johnson G.P."/>
            <person name="Perkus M.E."/>
            <person name="Davis S.W."/>
            <person name="Winslow J.P."/>
            <person name="Paoletti E."/>
        </authorList>
    </citation>
    <scope>COMPLETE GENOME</scope>
</reference>
<feature type="chain" id="PRO_0000099648" description="Uncharacterized 9.3 kDa protein">
    <location>
        <begin position="1"/>
        <end position="75"/>
    </location>
</feature>
<organismHost>
    <name type="scientific">Homo sapiens</name>
    <name type="common">Human</name>
    <dbReference type="NCBI Taxonomy" id="9606"/>
</organismHost>
<accession>P20516</accession>
<name>YVAG_VACCC</name>
<proteinExistence type="predicted"/>
<sequence length="75" mass="9318">MKYDVIVYWYIWKEIYQSRNKRLISHRNTKVHNLIIEEHFVTIVINIHSVICINEVLFKHDEMFICWHSSEIDVW</sequence>
<gene>
    <name type="ORF">A ORF G</name>
</gene>